<keyword id="KW-0028">Amino-acid biosynthesis</keyword>
<keyword id="KW-0368">Histidine biosynthesis</keyword>
<keyword id="KW-0378">Hydrolase</keyword>
<keyword id="KW-0486">Methionine biosynthesis</keyword>
<keyword id="KW-0511">Multifunctional enzyme</keyword>
<keyword id="KW-0521">NADP</keyword>
<keyword id="KW-0554">One-carbon metabolism</keyword>
<keyword id="KW-0560">Oxidoreductase</keyword>
<keyword id="KW-0658">Purine biosynthesis</keyword>
<gene>
    <name evidence="1" type="primary">folD</name>
    <name type="ordered locus">SH1894</name>
</gene>
<reference key="1">
    <citation type="journal article" date="2005" name="J. Bacteriol.">
        <title>Whole-genome sequencing of Staphylococcus haemolyticus uncovers the extreme plasticity of its genome and the evolution of human-colonizing staphylococcal species.</title>
        <authorList>
            <person name="Takeuchi F."/>
            <person name="Watanabe S."/>
            <person name="Baba T."/>
            <person name="Yuzawa H."/>
            <person name="Ito T."/>
            <person name="Morimoto Y."/>
            <person name="Kuroda M."/>
            <person name="Cui L."/>
            <person name="Takahashi M."/>
            <person name="Ankai A."/>
            <person name="Baba S."/>
            <person name="Fukui S."/>
            <person name="Lee J.C."/>
            <person name="Hiramatsu K."/>
        </authorList>
    </citation>
    <scope>NUCLEOTIDE SEQUENCE [LARGE SCALE GENOMIC DNA]</scope>
    <source>
        <strain>JCSC1435</strain>
    </source>
</reference>
<organism>
    <name type="scientific">Staphylococcus haemolyticus (strain JCSC1435)</name>
    <dbReference type="NCBI Taxonomy" id="279808"/>
    <lineage>
        <taxon>Bacteria</taxon>
        <taxon>Bacillati</taxon>
        <taxon>Bacillota</taxon>
        <taxon>Bacilli</taxon>
        <taxon>Bacillales</taxon>
        <taxon>Staphylococcaceae</taxon>
        <taxon>Staphylococcus</taxon>
    </lineage>
</organism>
<accession>Q4L572</accession>
<protein>
    <recommendedName>
        <fullName evidence="1">Bifunctional protein FolD</fullName>
    </recommendedName>
    <domain>
        <recommendedName>
            <fullName evidence="1">Methylenetetrahydrofolate dehydrogenase</fullName>
            <ecNumber evidence="1">1.5.1.5</ecNumber>
        </recommendedName>
    </domain>
    <domain>
        <recommendedName>
            <fullName evidence="1">Methenyltetrahydrofolate cyclohydrolase</fullName>
            <ecNumber evidence="1">3.5.4.9</ecNumber>
        </recommendedName>
    </domain>
</protein>
<proteinExistence type="inferred from homology"/>
<evidence type="ECO:0000255" key="1">
    <source>
        <dbReference type="HAMAP-Rule" id="MF_01576"/>
    </source>
</evidence>
<feature type="chain" id="PRO_0000265953" description="Bifunctional protein FolD">
    <location>
        <begin position="1"/>
        <end position="285"/>
    </location>
</feature>
<feature type="binding site" evidence="1">
    <location>
        <begin position="165"/>
        <end position="167"/>
    </location>
    <ligand>
        <name>NADP(+)</name>
        <dbReference type="ChEBI" id="CHEBI:58349"/>
    </ligand>
</feature>
<feature type="binding site" evidence="1">
    <location>
        <position position="190"/>
    </location>
    <ligand>
        <name>NADP(+)</name>
        <dbReference type="ChEBI" id="CHEBI:58349"/>
    </ligand>
</feature>
<name>FOLD_STAHJ</name>
<sequence>MVAKILDGKQISKDYRQGLQEQVEALKEKGYTPKLSVILVGNDGASQSYVNSKKKAAEKIGMISEIVHLDEDTSEEDVLKELDRLNNDDSVSGILVQVPLPKQVSEQKILEAINPEKDVDGFHPSNIGKLYIDEQTFVPCTPLGIMEILKHADIDLEGKNAVVIGRSHIVGQPVSKLLLQANATVTILHSRTKDMHSHLKDADVIVSAVGQPGLVTKDDVKEGAVIVDVGNTPDENGKLKGDVEFEEVKEVAGAITPVPGGVGPLTITMVLNNTLLAEKMRRGIE</sequence>
<comment type="function">
    <text evidence="1">Catalyzes the oxidation of 5,10-methylenetetrahydrofolate to 5,10-methenyltetrahydrofolate and then the hydrolysis of 5,10-methenyltetrahydrofolate to 10-formyltetrahydrofolate.</text>
</comment>
<comment type="catalytic activity">
    <reaction evidence="1">
        <text>(6R)-5,10-methylene-5,6,7,8-tetrahydrofolate + NADP(+) = (6R)-5,10-methenyltetrahydrofolate + NADPH</text>
        <dbReference type="Rhea" id="RHEA:22812"/>
        <dbReference type="ChEBI" id="CHEBI:15636"/>
        <dbReference type="ChEBI" id="CHEBI:57455"/>
        <dbReference type="ChEBI" id="CHEBI:57783"/>
        <dbReference type="ChEBI" id="CHEBI:58349"/>
        <dbReference type="EC" id="1.5.1.5"/>
    </reaction>
</comment>
<comment type="catalytic activity">
    <reaction evidence="1">
        <text>(6R)-5,10-methenyltetrahydrofolate + H2O = (6R)-10-formyltetrahydrofolate + H(+)</text>
        <dbReference type="Rhea" id="RHEA:23700"/>
        <dbReference type="ChEBI" id="CHEBI:15377"/>
        <dbReference type="ChEBI" id="CHEBI:15378"/>
        <dbReference type="ChEBI" id="CHEBI:57455"/>
        <dbReference type="ChEBI" id="CHEBI:195366"/>
        <dbReference type="EC" id="3.5.4.9"/>
    </reaction>
</comment>
<comment type="pathway">
    <text evidence="1">One-carbon metabolism; tetrahydrofolate interconversion.</text>
</comment>
<comment type="subunit">
    <text evidence="1">Homodimer.</text>
</comment>
<comment type="similarity">
    <text evidence="1">Belongs to the tetrahydrofolate dehydrogenase/cyclohydrolase family.</text>
</comment>
<dbReference type="EC" id="1.5.1.5" evidence="1"/>
<dbReference type="EC" id="3.5.4.9" evidence="1"/>
<dbReference type="EMBL" id="AP006716">
    <property type="protein sequence ID" value="BAE05203.1"/>
    <property type="molecule type" value="Genomic_DNA"/>
</dbReference>
<dbReference type="RefSeq" id="WP_011276167.1">
    <property type="nucleotide sequence ID" value="NC_007168.1"/>
</dbReference>
<dbReference type="SMR" id="Q4L572"/>
<dbReference type="KEGG" id="sha:SH1894"/>
<dbReference type="eggNOG" id="COG0190">
    <property type="taxonomic scope" value="Bacteria"/>
</dbReference>
<dbReference type="HOGENOM" id="CLU_034045_2_1_9"/>
<dbReference type="OrthoDB" id="9803580at2"/>
<dbReference type="UniPathway" id="UPA00193"/>
<dbReference type="Proteomes" id="UP000000543">
    <property type="component" value="Chromosome"/>
</dbReference>
<dbReference type="GO" id="GO:0005829">
    <property type="term" value="C:cytosol"/>
    <property type="evidence" value="ECO:0007669"/>
    <property type="project" value="TreeGrafter"/>
</dbReference>
<dbReference type="GO" id="GO:0004477">
    <property type="term" value="F:methenyltetrahydrofolate cyclohydrolase activity"/>
    <property type="evidence" value="ECO:0007669"/>
    <property type="project" value="UniProtKB-UniRule"/>
</dbReference>
<dbReference type="GO" id="GO:0004488">
    <property type="term" value="F:methylenetetrahydrofolate dehydrogenase (NADP+) activity"/>
    <property type="evidence" value="ECO:0007669"/>
    <property type="project" value="UniProtKB-UniRule"/>
</dbReference>
<dbReference type="GO" id="GO:0000105">
    <property type="term" value="P:L-histidine biosynthetic process"/>
    <property type="evidence" value="ECO:0007669"/>
    <property type="project" value="UniProtKB-KW"/>
</dbReference>
<dbReference type="GO" id="GO:0009086">
    <property type="term" value="P:methionine biosynthetic process"/>
    <property type="evidence" value="ECO:0007669"/>
    <property type="project" value="UniProtKB-KW"/>
</dbReference>
<dbReference type="GO" id="GO:0006164">
    <property type="term" value="P:purine nucleotide biosynthetic process"/>
    <property type="evidence" value="ECO:0007669"/>
    <property type="project" value="UniProtKB-KW"/>
</dbReference>
<dbReference type="GO" id="GO:0035999">
    <property type="term" value="P:tetrahydrofolate interconversion"/>
    <property type="evidence" value="ECO:0007669"/>
    <property type="project" value="UniProtKB-UniRule"/>
</dbReference>
<dbReference type="CDD" id="cd01080">
    <property type="entry name" value="NAD_bind_m-THF_DH_Cyclohyd"/>
    <property type="match status" value="1"/>
</dbReference>
<dbReference type="FunFam" id="3.40.50.10860:FF:000001">
    <property type="entry name" value="Bifunctional protein FolD"/>
    <property type="match status" value="1"/>
</dbReference>
<dbReference type="FunFam" id="3.40.50.720:FF:000094">
    <property type="entry name" value="Bifunctional protein FolD"/>
    <property type="match status" value="1"/>
</dbReference>
<dbReference type="Gene3D" id="3.40.50.10860">
    <property type="entry name" value="Leucine Dehydrogenase, chain A, domain 1"/>
    <property type="match status" value="1"/>
</dbReference>
<dbReference type="Gene3D" id="3.40.50.720">
    <property type="entry name" value="NAD(P)-binding Rossmann-like Domain"/>
    <property type="match status" value="1"/>
</dbReference>
<dbReference type="HAMAP" id="MF_01576">
    <property type="entry name" value="THF_DHG_CYH"/>
    <property type="match status" value="1"/>
</dbReference>
<dbReference type="InterPro" id="IPR046346">
    <property type="entry name" value="Aminoacid_DH-like_N_sf"/>
</dbReference>
<dbReference type="InterPro" id="IPR036291">
    <property type="entry name" value="NAD(P)-bd_dom_sf"/>
</dbReference>
<dbReference type="InterPro" id="IPR000672">
    <property type="entry name" value="THF_DH/CycHdrlase"/>
</dbReference>
<dbReference type="InterPro" id="IPR020630">
    <property type="entry name" value="THF_DH/CycHdrlase_cat_dom"/>
</dbReference>
<dbReference type="InterPro" id="IPR020631">
    <property type="entry name" value="THF_DH/CycHdrlase_NAD-bd_dom"/>
</dbReference>
<dbReference type="NCBIfam" id="NF010772">
    <property type="entry name" value="PRK14175.1"/>
    <property type="match status" value="1"/>
</dbReference>
<dbReference type="NCBIfam" id="NF010783">
    <property type="entry name" value="PRK14186.1"/>
    <property type="match status" value="1"/>
</dbReference>
<dbReference type="PANTHER" id="PTHR48099:SF5">
    <property type="entry name" value="C-1-TETRAHYDROFOLATE SYNTHASE, CYTOPLASMIC"/>
    <property type="match status" value="1"/>
</dbReference>
<dbReference type="PANTHER" id="PTHR48099">
    <property type="entry name" value="C-1-TETRAHYDROFOLATE SYNTHASE, CYTOPLASMIC-RELATED"/>
    <property type="match status" value="1"/>
</dbReference>
<dbReference type="Pfam" id="PF00763">
    <property type="entry name" value="THF_DHG_CYH"/>
    <property type="match status" value="1"/>
</dbReference>
<dbReference type="Pfam" id="PF02882">
    <property type="entry name" value="THF_DHG_CYH_C"/>
    <property type="match status" value="1"/>
</dbReference>
<dbReference type="PRINTS" id="PR00085">
    <property type="entry name" value="THFDHDRGNASE"/>
</dbReference>
<dbReference type="SUPFAM" id="SSF53223">
    <property type="entry name" value="Aminoacid dehydrogenase-like, N-terminal domain"/>
    <property type="match status" value="1"/>
</dbReference>
<dbReference type="SUPFAM" id="SSF51735">
    <property type="entry name" value="NAD(P)-binding Rossmann-fold domains"/>
    <property type="match status" value="1"/>
</dbReference>